<name>ROR1_HUMAN</name>
<gene>
    <name type="primary">ROR1</name>
    <name type="synonym">NTRKR1</name>
</gene>
<evidence type="ECO:0000250" key="1"/>
<evidence type="ECO:0000250" key="2">
    <source>
        <dbReference type="UniProtKB" id="Q9Z139"/>
    </source>
</evidence>
<evidence type="ECO:0000255" key="3"/>
<evidence type="ECO:0000255" key="4">
    <source>
        <dbReference type="PROSITE-ProRule" id="PRU00090"/>
    </source>
</evidence>
<evidence type="ECO:0000255" key="5">
    <source>
        <dbReference type="PROSITE-ProRule" id="PRU00121"/>
    </source>
</evidence>
<evidence type="ECO:0000255" key="6">
    <source>
        <dbReference type="PROSITE-ProRule" id="PRU00159"/>
    </source>
</evidence>
<evidence type="ECO:0000256" key="7">
    <source>
        <dbReference type="SAM" id="MobiDB-lite"/>
    </source>
</evidence>
<evidence type="ECO:0000269" key="8">
    <source>
    </source>
</evidence>
<evidence type="ECO:0000269" key="9">
    <source>
    </source>
</evidence>
<evidence type="ECO:0000269" key="10">
    <source>
    </source>
</evidence>
<evidence type="ECO:0000269" key="11">
    <source>
    </source>
</evidence>
<evidence type="ECO:0000269" key="12">
    <source>
    </source>
</evidence>
<evidence type="ECO:0000269" key="13">
    <source>
    </source>
</evidence>
<evidence type="ECO:0000303" key="14">
    <source>
    </source>
</evidence>
<evidence type="ECO:0000303" key="15">
    <source>
    </source>
</evidence>
<evidence type="ECO:0000305" key="16"/>
<evidence type="ECO:0007829" key="17">
    <source>
        <dbReference type="PDB" id="6TU9"/>
    </source>
</evidence>
<evidence type="ECO:0007829" key="18">
    <source>
        <dbReference type="PDB" id="7TNG"/>
    </source>
</evidence>
<organism>
    <name type="scientific">Homo sapiens</name>
    <name type="common">Human</name>
    <dbReference type="NCBI Taxonomy" id="9606"/>
    <lineage>
        <taxon>Eukaryota</taxon>
        <taxon>Metazoa</taxon>
        <taxon>Chordata</taxon>
        <taxon>Craniata</taxon>
        <taxon>Vertebrata</taxon>
        <taxon>Euteleostomi</taxon>
        <taxon>Mammalia</taxon>
        <taxon>Eutheria</taxon>
        <taxon>Euarchontoglires</taxon>
        <taxon>Primates</taxon>
        <taxon>Haplorrhini</taxon>
        <taxon>Catarrhini</taxon>
        <taxon>Hominidae</taxon>
        <taxon>Homo</taxon>
    </lineage>
</organism>
<proteinExistence type="evidence at protein level"/>
<keyword id="KW-0002">3D-structure</keyword>
<keyword id="KW-0025">Alternative splicing</keyword>
<keyword id="KW-0067">ATP-binding</keyword>
<keyword id="KW-0966">Cell projection</keyword>
<keyword id="KW-0209">Deafness</keyword>
<keyword id="KW-0225">Disease variant</keyword>
<keyword id="KW-1015">Disulfide bond</keyword>
<keyword id="KW-0325">Glycoprotein</keyword>
<keyword id="KW-0393">Immunoglobulin domain</keyword>
<keyword id="KW-0418">Kinase</keyword>
<keyword id="KW-0420">Kringle</keyword>
<keyword id="KW-0472">Membrane</keyword>
<keyword id="KW-1010">Non-syndromic deafness</keyword>
<keyword id="KW-0547">Nucleotide-binding</keyword>
<keyword id="KW-0597">Phosphoprotein</keyword>
<keyword id="KW-1267">Proteomics identification</keyword>
<keyword id="KW-0675">Receptor</keyword>
<keyword id="KW-1185">Reference proteome</keyword>
<keyword id="KW-0732">Signal</keyword>
<keyword id="KW-0808">Transferase</keyword>
<keyword id="KW-0812">Transmembrane</keyword>
<keyword id="KW-1133">Transmembrane helix</keyword>
<keyword id="KW-0879">Wnt signaling pathway</keyword>
<feature type="signal peptide" evidence="3">
    <location>
        <begin position="1"/>
        <end position="29"/>
    </location>
</feature>
<feature type="chain" id="PRO_0000024458" description="Inactive tyrosine-protein kinase transmembrane receptor ROR1">
    <location>
        <begin position="30"/>
        <end position="937"/>
    </location>
</feature>
<feature type="topological domain" description="Extracellular" evidence="3">
    <location>
        <begin position="30"/>
        <end position="406"/>
    </location>
</feature>
<feature type="transmembrane region" description="Helical" evidence="3">
    <location>
        <begin position="407"/>
        <end position="427"/>
    </location>
</feature>
<feature type="topological domain" description="Cytoplasmic" evidence="3">
    <location>
        <begin position="428"/>
        <end position="937"/>
    </location>
</feature>
<feature type="domain" description="Ig-like C2-type">
    <location>
        <begin position="42"/>
        <end position="147"/>
    </location>
</feature>
<feature type="domain" description="FZ" evidence="4">
    <location>
        <begin position="165"/>
        <end position="299"/>
    </location>
</feature>
<feature type="domain" description="Kringle" evidence="5">
    <location>
        <begin position="312"/>
        <end position="391"/>
    </location>
</feature>
<feature type="domain" description="Protein kinase" evidence="6">
    <location>
        <begin position="473"/>
        <end position="746"/>
    </location>
</feature>
<feature type="region of interest" description="Disordered" evidence="7">
    <location>
        <begin position="753"/>
        <end position="779"/>
    </location>
</feature>
<feature type="region of interest" description="Disordered" evidence="7">
    <location>
        <begin position="833"/>
        <end position="890"/>
    </location>
</feature>
<feature type="compositionally biased region" description="Low complexity" evidence="7">
    <location>
        <begin position="753"/>
        <end position="762"/>
    </location>
</feature>
<feature type="compositionally biased region" description="Polar residues" evidence="7">
    <location>
        <begin position="763"/>
        <end position="779"/>
    </location>
</feature>
<feature type="compositionally biased region" description="Low complexity" evidence="7">
    <location>
        <begin position="854"/>
        <end position="864"/>
    </location>
</feature>
<feature type="compositionally biased region" description="Polar residues" evidence="7">
    <location>
        <begin position="865"/>
        <end position="880"/>
    </location>
</feature>
<feature type="binding site" evidence="6">
    <location>
        <begin position="479"/>
        <end position="487"/>
    </location>
    <ligand>
        <name>ATP</name>
        <dbReference type="ChEBI" id="CHEBI:30616"/>
    </ligand>
</feature>
<feature type="binding site" evidence="6">
    <location>
        <position position="506"/>
    </location>
    <ligand>
        <name>ATP</name>
        <dbReference type="ChEBI" id="CHEBI:30616"/>
    </ligand>
</feature>
<feature type="modified residue" description="Phosphotyrosine; by autocatalysis" evidence="1">
    <location>
        <position position="645"/>
    </location>
</feature>
<feature type="glycosylation site" description="N-linked (GlcNAc...) asparagine" evidence="3">
    <location>
        <position position="47"/>
    </location>
</feature>
<feature type="glycosylation site" description="N-linked (GlcNAc...) asparagine" evidence="3">
    <location>
        <position position="66"/>
    </location>
</feature>
<feature type="glycosylation site" description="N-linked (GlcNAc...) asparagine" evidence="3">
    <location>
        <position position="184"/>
    </location>
</feature>
<feature type="glycosylation site" description="N-linked (GlcNAc...) asparagine" evidence="3">
    <location>
        <position position="315"/>
    </location>
</feature>
<feature type="disulfide bond" evidence="1">
    <location>
        <begin position="79"/>
        <end position="131"/>
    </location>
</feature>
<feature type="disulfide bond" evidence="1">
    <location>
        <begin position="170"/>
        <end position="235"/>
    </location>
</feature>
<feature type="disulfide bond" evidence="1">
    <location>
        <begin position="178"/>
        <end position="228"/>
    </location>
</feature>
<feature type="disulfide bond" evidence="1">
    <location>
        <begin position="219"/>
        <end position="260"/>
    </location>
</feature>
<feature type="disulfide bond" evidence="1">
    <location>
        <begin position="248"/>
        <end position="296"/>
    </location>
</feature>
<feature type="disulfide bond" evidence="1">
    <location>
        <begin position="252"/>
        <end position="282"/>
    </location>
</feature>
<feature type="disulfide bond" evidence="1">
    <location>
        <begin position="313"/>
        <end position="391"/>
    </location>
</feature>
<feature type="disulfide bond" evidence="1">
    <location>
        <begin position="334"/>
        <end position="374"/>
    </location>
</feature>
<feature type="disulfide bond" evidence="1">
    <location>
        <begin position="362"/>
        <end position="386"/>
    </location>
</feature>
<feature type="splice variant" id="VSP_005008" description="In isoform Short." evidence="15">
    <location>
        <begin position="1"/>
        <end position="549"/>
    </location>
</feature>
<feature type="splice variant" id="VSP_043663" description="In isoform 3." evidence="14">
    <original>DS</original>
    <variation>GK</variation>
    <location>
        <begin position="392"/>
        <end position="393"/>
    </location>
</feature>
<feature type="splice variant" id="VSP_043664" description="In isoform 3." evidence="14">
    <location>
        <begin position="394"/>
        <end position="937"/>
    </location>
</feature>
<feature type="sequence variant" id="VAR_041779" description="In a metastatic melanoma sample; somatic mutation." evidence="10">
    <original>G</original>
    <variation>E</variation>
    <location>
        <position position="144"/>
    </location>
</feature>
<feature type="sequence variant" id="VAR_041780" description="In an ovarian mucinous carcinoma sample; somatic mutation." evidence="10">
    <original>F</original>
    <variation>L</variation>
    <location>
        <position position="150"/>
    </location>
</feature>
<feature type="sequence variant" id="VAR_041781" description="In a renal clear cell carcinoma sample; somatic mutation." evidence="10">
    <original>I</original>
    <variation>V</variation>
    <location>
        <position position="301"/>
    </location>
</feature>
<feature type="sequence variant" id="VAR_041782" description="In dbSNP:rs7527017." evidence="8 10">
    <original>T</original>
    <variation>M</variation>
    <location>
        <position position="518"/>
    </location>
</feature>
<feature type="sequence variant" id="VAR_035713" description="In a breast cancer sample; somatic mutation; dbSNP:rs760789417." evidence="9">
    <original>E</original>
    <variation>D</variation>
    <location>
        <position position="562"/>
    </location>
</feature>
<feature type="sequence variant" id="VAR_041783" description="In a colorectal adenocarcinoma sample; somatic mutation." evidence="10">
    <original>R</original>
    <variation>I</variation>
    <location>
        <position position="567"/>
    </location>
</feature>
<feature type="sequence variant" id="VAR_041784" description="In dbSNP:rs55832740." evidence="10">
    <original>G</original>
    <variation>R</variation>
    <location>
        <position position="624"/>
    </location>
</feature>
<feature type="sequence variant" id="VAR_041785" description="In dbSNP:rs34109134." evidence="10">
    <original>Y</original>
    <variation>C</variation>
    <location>
        <position position="646"/>
    </location>
</feature>
<feature type="sequence variant" id="VAR_079530" description="In DFNB108; impairs plasma membrane location; abolishes downstream NFkB activation; dbSNP:rs1553163562." evidence="12">
    <original>R</original>
    <variation>T</variation>
    <location>
        <position position="736"/>
    </location>
</feature>
<feature type="sequence variant" id="VAR_041786" description="In a colorectal adenocarcinoma sample; somatic mutation." evidence="10">
    <original>S</original>
    <variation>N</variation>
    <location>
        <position position="776"/>
    </location>
</feature>
<feature type="mutagenesis site" description="No effect on kinase activity." evidence="11">
    <original>C</original>
    <variation>G</variation>
    <location>
        <position position="482"/>
    </location>
</feature>
<feature type="strand" evidence="18">
    <location>
        <begin position="312"/>
        <end position="314"/>
    </location>
</feature>
<feature type="strand" evidence="18">
    <location>
        <begin position="341"/>
        <end position="343"/>
    </location>
</feature>
<feature type="turn" evidence="18">
    <location>
        <begin position="349"/>
        <end position="351"/>
    </location>
</feature>
<feature type="helix" evidence="18">
    <location>
        <begin position="353"/>
        <end position="355"/>
    </location>
</feature>
<feature type="helix" evidence="18">
    <location>
        <begin position="365"/>
        <end position="367"/>
    </location>
</feature>
<feature type="strand" evidence="18">
    <location>
        <begin position="369"/>
        <end position="371"/>
    </location>
</feature>
<feature type="strand" evidence="18">
    <location>
        <begin position="373"/>
        <end position="377"/>
    </location>
</feature>
<feature type="strand" evidence="18">
    <location>
        <begin position="383"/>
        <end position="387"/>
    </location>
</feature>
<feature type="helix" evidence="17">
    <location>
        <begin position="470"/>
        <end position="472"/>
    </location>
</feature>
<feature type="strand" evidence="17">
    <location>
        <begin position="473"/>
        <end position="481"/>
    </location>
</feature>
<feature type="strand" evidence="17">
    <location>
        <begin position="486"/>
        <end position="492"/>
    </location>
</feature>
<feature type="strand" evidence="17">
    <location>
        <begin position="501"/>
        <end position="507"/>
    </location>
</feature>
<feature type="helix" evidence="17">
    <location>
        <begin position="514"/>
        <end position="527"/>
    </location>
</feature>
<feature type="strand" evidence="17">
    <location>
        <begin position="538"/>
        <end position="542"/>
    </location>
</feature>
<feature type="strand" evidence="17">
    <location>
        <begin position="544"/>
        <end position="547"/>
    </location>
</feature>
<feature type="strand" evidence="17">
    <location>
        <begin position="549"/>
        <end position="553"/>
    </location>
</feature>
<feature type="helix" evidence="17">
    <location>
        <begin position="560"/>
        <end position="566"/>
    </location>
</feature>
<feature type="helix" evidence="17">
    <location>
        <begin position="589"/>
        <end position="608"/>
    </location>
</feature>
<feature type="helix" evidence="17">
    <location>
        <begin position="618"/>
        <end position="620"/>
    </location>
</feature>
<feature type="strand" evidence="17">
    <location>
        <begin position="621"/>
        <end position="623"/>
    </location>
</feature>
<feature type="helix" evidence="17">
    <location>
        <begin position="625"/>
        <end position="627"/>
    </location>
</feature>
<feature type="strand" evidence="17">
    <location>
        <begin position="629"/>
        <end position="631"/>
    </location>
</feature>
<feature type="helix" evidence="17">
    <location>
        <begin position="636"/>
        <end position="640"/>
    </location>
</feature>
<feature type="helix" evidence="17">
    <location>
        <begin position="642"/>
        <end position="644"/>
    </location>
</feature>
<feature type="helix" evidence="17">
    <location>
        <begin position="656"/>
        <end position="658"/>
    </location>
</feature>
<feature type="helix" evidence="17">
    <location>
        <begin position="661"/>
        <end position="666"/>
    </location>
</feature>
<feature type="helix" evidence="17">
    <location>
        <begin position="671"/>
        <end position="686"/>
    </location>
</feature>
<feature type="turn" evidence="17">
    <location>
        <begin position="692"/>
        <end position="695"/>
    </location>
</feature>
<feature type="helix" evidence="17">
    <location>
        <begin position="698"/>
        <end position="706"/>
    </location>
</feature>
<feature type="helix" evidence="17">
    <location>
        <begin position="719"/>
        <end position="728"/>
    </location>
</feature>
<feature type="helix" evidence="17">
    <location>
        <begin position="733"/>
        <end position="735"/>
    </location>
</feature>
<feature type="helix" evidence="17">
    <location>
        <begin position="739"/>
        <end position="748"/>
    </location>
</feature>
<protein>
    <recommendedName>
        <fullName evidence="16">Inactive tyrosine-protein kinase transmembrane receptor ROR1</fullName>
    </recommendedName>
    <alternativeName>
        <fullName>Neurotrophic tyrosine kinase, receptor-related 1</fullName>
    </alternativeName>
</protein>
<comment type="function">
    <text evidence="11 12 13">Has very low kinase activity in vitro and is unlikely to function as a tyrosine kinase in vivo (PubMed:25029443). Receptor for ligand WNT5A which activate downstream NFkB signaling pathway and may result in the inhibition of WNT3A-mediated signaling (PubMed:25029443, PubMed:27162350). In inner ear, crucial for spiral ganglion neurons to innervate auditory hair cells (PubMed:27162350). Via IGFBP5 ligand, forms a complex with ERBB2 to enhance CREB oncogenic signaling (PubMed:36949068).</text>
</comment>
<comment type="subunit">
    <text evidence="13">Interacts with ERBB2 and IGFBP5.</text>
</comment>
<comment type="interaction">
    <interactant intactId="EBI-6082337">
        <id>Q01973</id>
    </interactant>
    <interactant intactId="EBI-297353">
        <id>P00533</id>
        <label>EGFR</label>
    </interactant>
    <organismsDiffer>false</organismsDiffer>
    <experiments>8</experiments>
</comment>
<comment type="interaction">
    <interactant intactId="EBI-6082337">
        <id>Q01973</id>
    </interactant>
    <interactant intactId="EBI-621482">
        <id>P12931</id>
        <label>SRC</label>
    </interactant>
    <organismsDiffer>false</organismsDiffer>
    <experiments>9</experiments>
</comment>
<comment type="interaction">
    <interactant intactId="EBI-6082337">
        <id>Q01973</id>
    </interactant>
    <interactant intactId="EBI-298680">
        <id>P05480</id>
        <label>Src</label>
    </interactant>
    <organismsDiffer>true</organismsDiffer>
    <experiments>2</experiments>
</comment>
<comment type="subcellular location">
    <subcellularLocation>
        <location evidence="12">Membrane</location>
        <topology>Single-pass type I membrane protein</topology>
    </subcellularLocation>
    <subcellularLocation>
        <location evidence="2">Cell projection</location>
        <location evidence="2">Axon</location>
    </subcellularLocation>
</comment>
<comment type="alternative products">
    <event type="alternative splicing"/>
    <isoform>
        <id>Q01973-1</id>
        <name>Long</name>
        <sequence type="displayed"/>
    </isoform>
    <isoform>
        <id>Q01973-2</id>
        <name>Short</name>
        <name>T-ROR1</name>
        <sequence type="described" ref="VSP_005008"/>
    </isoform>
    <isoform>
        <id>Q01973-3</id>
        <name>3</name>
        <sequence type="described" ref="VSP_043663 VSP_043664"/>
    </isoform>
</comment>
<comment type="tissue specificity">
    <text>Expressed strongly in human heart, lung and kidney, but weakly in the CNS. Isoform Short is strongly expressed in fetal and adult CNS and in a variety of human cancers, including those originating from CNS or PNS neuroectoderm.</text>
</comment>
<comment type="developmental stage">
    <text>Expressed at high levels during early embryonic development. The expression levels drop strongly around day 16 and there are only very low levels in adult tissues.</text>
</comment>
<comment type="disease" evidence="12">
    <disease id="DI-05055">
        <name>Deafness, autosomal recessive, 108</name>
        <acronym>DFNB108</acronym>
        <description>A form of non-syndromic sensorineural hearing loss. Sensorineural deafness results from damage to the neural receptors of the inner ear, the nerve pathways to the brain, or the area of the brain that receives sound information.</description>
        <dbReference type="MIM" id="617654"/>
    </disease>
    <text>The disease is caused by variants affecting the gene represented in this entry.</text>
</comment>
<comment type="similarity">
    <text evidence="6">Belongs to the protein kinase superfamily. Tyr protein kinase family. ROR subfamily.</text>
</comment>
<comment type="caution">
    <text evidence="11">The kinase domain has very low catalytic activity in vitro.</text>
</comment>
<reference key="1">
    <citation type="journal article" date="1992" name="J. Biol. Chem.">
        <title>A novel family of cell surface receptors with tyrosine kinase-like domain.</title>
        <authorList>
            <person name="Masiakowski P."/>
            <person name="Carroll R.D."/>
        </authorList>
    </citation>
    <scope>NUCLEOTIDE SEQUENCE [MRNA] (ISOFORM LONG)</scope>
    <scope>VARIANT MET-518</scope>
</reference>
<reference key="2">
    <citation type="journal article" date="1996" name="Oncogene">
        <title>Human neural tissues express a truncated Ror1 receptor tyrosine kinase, lacking both extracellular and transmembrane domains.</title>
        <authorList>
            <person name="Reddy U.R."/>
            <person name="Phatak S."/>
            <person name="Pleasure D."/>
        </authorList>
    </citation>
    <scope>NUCLEOTIDE SEQUENCE [MRNA] (ISOFORM SHORT)</scope>
</reference>
<reference key="3">
    <citation type="journal article" date="2006" name="Nature">
        <title>The DNA sequence and biological annotation of human chromosome 1.</title>
        <authorList>
            <person name="Gregory S.G."/>
            <person name="Barlow K.F."/>
            <person name="McLay K.E."/>
            <person name="Kaul R."/>
            <person name="Swarbreck D."/>
            <person name="Dunham A."/>
            <person name="Scott C.E."/>
            <person name="Howe K.L."/>
            <person name="Woodfine K."/>
            <person name="Spencer C.C.A."/>
            <person name="Jones M.C."/>
            <person name="Gillson C."/>
            <person name="Searle S."/>
            <person name="Zhou Y."/>
            <person name="Kokocinski F."/>
            <person name="McDonald L."/>
            <person name="Evans R."/>
            <person name="Phillips K."/>
            <person name="Atkinson A."/>
            <person name="Cooper R."/>
            <person name="Jones C."/>
            <person name="Hall R.E."/>
            <person name="Andrews T.D."/>
            <person name="Lloyd C."/>
            <person name="Ainscough R."/>
            <person name="Almeida J.P."/>
            <person name="Ambrose K.D."/>
            <person name="Anderson F."/>
            <person name="Andrew R.W."/>
            <person name="Ashwell R.I.S."/>
            <person name="Aubin K."/>
            <person name="Babbage A.K."/>
            <person name="Bagguley C.L."/>
            <person name="Bailey J."/>
            <person name="Beasley H."/>
            <person name="Bethel G."/>
            <person name="Bird C.P."/>
            <person name="Bray-Allen S."/>
            <person name="Brown J.Y."/>
            <person name="Brown A.J."/>
            <person name="Buckley D."/>
            <person name="Burton J."/>
            <person name="Bye J."/>
            <person name="Carder C."/>
            <person name="Chapman J.C."/>
            <person name="Clark S.Y."/>
            <person name="Clarke G."/>
            <person name="Clee C."/>
            <person name="Cobley V."/>
            <person name="Collier R.E."/>
            <person name="Corby N."/>
            <person name="Coville G.J."/>
            <person name="Davies J."/>
            <person name="Deadman R."/>
            <person name="Dunn M."/>
            <person name="Earthrowl M."/>
            <person name="Ellington A.G."/>
            <person name="Errington H."/>
            <person name="Frankish A."/>
            <person name="Frankland J."/>
            <person name="French L."/>
            <person name="Garner P."/>
            <person name="Garnett J."/>
            <person name="Gay L."/>
            <person name="Ghori M.R.J."/>
            <person name="Gibson R."/>
            <person name="Gilby L.M."/>
            <person name="Gillett W."/>
            <person name="Glithero R.J."/>
            <person name="Grafham D.V."/>
            <person name="Griffiths C."/>
            <person name="Griffiths-Jones S."/>
            <person name="Grocock R."/>
            <person name="Hammond S."/>
            <person name="Harrison E.S.I."/>
            <person name="Hart E."/>
            <person name="Haugen E."/>
            <person name="Heath P.D."/>
            <person name="Holmes S."/>
            <person name="Holt K."/>
            <person name="Howden P.J."/>
            <person name="Hunt A.R."/>
            <person name="Hunt S.E."/>
            <person name="Hunter G."/>
            <person name="Isherwood J."/>
            <person name="James R."/>
            <person name="Johnson C."/>
            <person name="Johnson D."/>
            <person name="Joy A."/>
            <person name="Kay M."/>
            <person name="Kershaw J.K."/>
            <person name="Kibukawa M."/>
            <person name="Kimberley A.M."/>
            <person name="King A."/>
            <person name="Knights A.J."/>
            <person name="Lad H."/>
            <person name="Laird G."/>
            <person name="Lawlor S."/>
            <person name="Leongamornlert D.A."/>
            <person name="Lloyd D.M."/>
            <person name="Loveland J."/>
            <person name="Lovell J."/>
            <person name="Lush M.J."/>
            <person name="Lyne R."/>
            <person name="Martin S."/>
            <person name="Mashreghi-Mohammadi M."/>
            <person name="Matthews L."/>
            <person name="Matthews N.S.W."/>
            <person name="McLaren S."/>
            <person name="Milne S."/>
            <person name="Mistry S."/>
            <person name="Moore M.J.F."/>
            <person name="Nickerson T."/>
            <person name="O'Dell C.N."/>
            <person name="Oliver K."/>
            <person name="Palmeiri A."/>
            <person name="Palmer S.A."/>
            <person name="Parker A."/>
            <person name="Patel D."/>
            <person name="Pearce A.V."/>
            <person name="Peck A.I."/>
            <person name="Pelan S."/>
            <person name="Phelps K."/>
            <person name="Phillimore B.J."/>
            <person name="Plumb R."/>
            <person name="Rajan J."/>
            <person name="Raymond C."/>
            <person name="Rouse G."/>
            <person name="Saenphimmachak C."/>
            <person name="Sehra H.K."/>
            <person name="Sheridan E."/>
            <person name="Shownkeen R."/>
            <person name="Sims S."/>
            <person name="Skuce C.D."/>
            <person name="Smith M."/>
            <person name="Steward C."/>
            <person name="Subramanian S."/>
            <person name="Sycamore N."/>
            <person name="Tracey A."/>
            <person name="Tromans A."/>
            <person name="Van Helmond Z."/>
            <person name="Wall M."/>
            <person name="Wallis J.M."/>
            <person name="White S."/>
            <person name="Whitehead S.L."/>
            <person name="Wilkinson J.E."/>
            <person name="Willey D.L."/>
            <person name="Williams H."/>
            <person name="Wilming L."/>
            <person name="Wray P.W."/>
            <person name="Wu Z."/>
            <person name="Coulson A."/>
            <person name="Vaudin M."/>
            <person name="Sulston J.E."/>
            <person name="Durbin R.M."/>
            <person name="Hubbard T."/>
            <person name="Wooster R."/>
            <person name="Dunham I."/>
            <person name="Carter N.P."/>
            <person name="McVean G."/>
            <person name="Ross M.T."/>
            <person name="Harrow J."/>
            <person name="Olson M.V."/>
            <person name="Beck S."/>
            <person name="Rogers J."/>
            <person name="Bentley D.R."/>
        </authorList>
    </citation>
    <scope>NUCLEOTIDE SEQUENCE [LARGE SCALE GENOMIC DNA]</scope>
</reference>
<reference key="4">
    <citation type="submission" date="2005-09" db="EMBL/GenBank/DDBJ databases">
        <authorList>
            <person name="Mural R.J."/>
            <person name="Istrail S."/>
            <person name="Sutton G."/>
            <person name="Florea L."/>
            <person name="Halpern A.L."/>
            <person name="Mobarry C.M."/>
            <person name="Lippert R."/>
            <person name="Walenz B."/>
            <person name="Shatkay H."/>
            <person name="Dew I."/>
            <person name="Miller J.R."/>
            <person name="Flanigan M.J."/>
            <person name="Edwards N.J."/>
            <person name="Bolanos R."/>
            <person name="Fasulo D."/>
            <person name="Halldorsson B.V."/>
            <person name="Hannenhalli S."/>
            <person name="Turner R."/>
            <person name="Yooseph S."/>
            <person name="Lu F."/>
            <person name="Nusskern D.R."/>
            <person name="Shue B.C."/>
            <person name="Zheng X.H."/>
            <person name="Zhong F."/>
            <person name="Delcher A.L."/>
            <person name="Huson D.H."/>
            <person name="Kravitz S.A."/>
            <person name="Mouchard L."/>
            <person name="Reinert K."/>
            <person name="Remington K.A."/>
            <person name="Clark A.G."/>
            <person name="Waterman M.S."/>
            <person name="Eichler E.E."/>
            <person name="Adams M.D."/>
            <person name="Hunkapiller M.W."/>
            <person name="Myers E.W."/>
            <person name="Venter J.C."/>
        </authorList>
    </citation>
    <scope>NUCLEOTIDE SEQUENCE [LARGE SCALE GENOMIC DNA]</scope>
</reference>
<reference key="5">
    <citation type="journal article" date="2004" name="Genome Res.">
        <title>The status, quality, and expansion of the NIH full-length cDNA project: the Mammalian Gene Collection (MGC).</title>
        <authorList>
            <consortium name="The MGC Project Team"/>
        </authorList>
    </citation>
    <scope>NUCLEOTIDE SEQUENCE [LARGE SCALE MRNA] (ISOFORM 3)</scope>
    <source>
        <tissue>Brain</tissue>
    </source>
</reference>
<reference key="6">
    <citation type="journal article" date="2014" name="PLoS ONE">
        <title>Evolutionary divergence in the catalytic activity of the CAM-1, ROR1 and ROR2 kinase domains.</title>
        <authorList>
            <person name="Bainbridge T.W."/>
            <person name="DeAlmeida V.I."/>
            <person name="Izrael-Tomasevic A."/>
            <person name="Chalouni C."/>
            <person name="Pan B."/>
            <person name="Goldsmith J."/>
            <person name="Schoen A.P."/>
            <person name="Quinones G.A."/>
            <person name="Kelly R."/>
            <person name="Lill J.R."/>
            <person name="Sandoval W."/>
            <person name="Costa M."/>
            <person name="Polakis P."/>
            <person name="Arnott D."/>
            <person name="Rubinfeld B."/>
            <person name="Ernst J.A."/>
        </authorList>
    </citation>
    <scope>LACK OF CATALYTIC ACTIVITY</scope>
    <scope>MUTAGENESIS OF CYS-482</scope>
</reference>
<reference key="7">
    <citation type="journal article" date="2023" name="Nat. Commun.">
        <title>IGFBP5 is an ROR1 ligand promoting glioblastoma invasion via ROR1/HER2-CREB signaling axis.</title>
        <authorList>
            <person name="Lin W."/>
            <person name="Niu R."/>
            <person name="Park S.M."/>
            <person name="Zou Y."/>
            <person name="Kim S.S."/>
            <person name="Xia X."/>
            <person name="Xing S."/>
            <person name="Yang Q."/>
            <person name="Sun X."/>
            <person name="Yuan Z."/>
            <person name="Zhou S."/>
            <person name="Zhang D."/>
            <person name="Kwon H.J."/>
            <person name="Park S."/>
            <person name="Il Kim C."/>
            <person name="Koo H."/>
            <person name="Liu Y."/>
            <person name="Wu H."/>
            <person name="Zheng M."/>
            <person name="Yoo H."/>
            <person name="Shi B."/>
            <person name="Park J.B."/>
            <person name="Yin J."/>
        </authorList>
    </citation>
    <scope>FUNCTION</scope>
    <scope>INTERACTION WITH IGFBP5 AND ERBB2</scope>
</reference>
<reference key="8">
    <citation type="journal article" date="2006" name="Science">
        <title>The consensus coding sequences of human breast and colorectal cancers.</title>
        <authorList>
            <person name="Sjoeblom T."/>
            <person name="Jones S."/>
            <person name="Wood L.D."/>
            <person name="Parsons D.W."/>
            <person name="Lin J."/>
            <person name="Barber T.D."/>
            <person name="Mandelker D."/>
            <person name="Leary R.J."/>
            <person name="Ptak J."/>
            <person name="Silliman N."/>
            <person name="Szabo S."/>
            <person name="Buckhaults P."/>
            <person name="Farrell C."/>
            <person name="Meeh P."/>
            <person name="Markowitz S.D."/>
            <person name="Willis J."/>
            <person name="Dawson D."/>
            <person name="Willson J.K.V."/>
            <person name="Gazdar A.F."/>
            <person name="Hartigan J."/>
            <person name="Wu L."/>
            <person name="Liu C."/>
            <person name="Parmigiani G."/>
            <person name="Park B.H."/>
            <person name="Bachman K.E."/>
            <person name="Papadopoulos N."/>
            <person name="Vogelstein B."/>
            <person name="Kinzler K.W."/>
            <person name="Velculescu V.E."/>
        </authorList>
    </citation>
    <scope>VARIANT [LARGE SCALE ANALYSIS] ASP-562</scope>
</reference>
<reference key="9">
    <citation type="journal article" date="2007" name="Nature">
        <title>Patterns of somatic mutation in human cancer genomes.</title>
        <authorList>
            <person name="Greenman C."/>
            <person name="Stephens P."/>
            <person name="Smith R."/>
            <person name="Dalgliesh G.L."/>
            <person name="Hunter C."/>
            <person name="Bignell G."/>
            <person name="Davies H."/>
            <person name="Teague J."/>
            <person name="Butler A."/>
            <person name="Stevens C."/>
            <person name="Edkins S."/>
            <person name="O'Meara S."/>
            <person name="Vastrik I."/>
            <person name="Schmidt E.E."/>
            <person name="Avis T."/>
            <person name="Barthorpe S."/>
            <person name="Bhamra G."/>
            <person name="Buck G."/>
            <person name="Choudhury B."/>
            <person name="Clements J."/>
            <person name="Cole J."/>
            <person name="Dicks E."/>
            <person name="Forbes S."/>
            <person name="Gray K."/>
            <person name="Halliday K."/>
            <person name="Harrison R."/>
            <person name="Hills K."/>
            <person name="Hinton J."/>
            <person name="Jenkinson A."/>
            <person name="Jones D."/>
            <person name="Menzies A."/>
            <person name="Mironenko T."/>
            <person name="Perry J."/>
            <person name="Raine K."/>
            <person name="Richardson D."/>
            <person name="Shepherd R."/>
            <person name="Small A."/>
            <person name="Tofts C."/>
            <person name="Varian J."/>
            <person name="Webb T."/>
            <person name="West S."/>
            <person name="Widaa S."/>
            <person name="Yates A."/>
            <person name="Cahill D.P."/>
            <person name="Louis D.N."/>
            <person name="Goldstraw P."/>
            <person name="Nicholson A.G."/>
            <person name="Brasseur F."/>
            <person name="Looijenga L."/>
            <person name="Weber B.L."/>
            <person name="Chiew Y.-E."/>
            <person name="DeFazio A."/>
            <person name="Greaves M.F."/>
            <person name="Green A.R."/>
            <person name="Campbell P."/>
            <person name="Birney E."/>
            <person name="Easton D.F."/>
            <person name="Chenevix-Trench G."/>
            <person name="Tan M.-H."/>
            <person name="Khoo S.K."/>
            <person name="Teh B.T."/>
            <person name="Yuen S.T."/>
            <person name="Leung S.Y."/>
            <person name="Wooster R."/>
            <person name="Futreal P.A."/>
            <person name="Stratton M.R."/>
        </authorList>
    </citation>
    <scope>VARIANTS [LARGE SCALE ANALYSIS] GLU-144; LEU-150; VAL-301; MET-518; ILE-567; ARG-624; CYS-646 AND ASN-776</scope>
</reference>
<reference key="10">
    <citation type="journal article" date="2016" name="Proc. Natl. Acad. Sci. U.S.A.">
        <title>ROR1 is essential for proper innervation of auditory hair cells and hearing in humans and mice.</title>
        <authorList>
            <person name="Diaz-Horta O."/>
            <person name="Abad C."/>
            <person name="Sennaroglu L."/>
            <person name="Foster J. II"/>
            <person name="DeSmidt A."/>
            <person name="Bademci G."/>
            <person name="Tokgoz-Yilmaz S."/>
            <person name="Duman D."/>
            <person name="Cengiz F.B."/>
            <person name="Grati M."/>
            <person name="Fitoz S."/>
            <person name="Liu X.Z."/>
            <person name="Farooq A."/>
            <person name="Imtiaz F."/>
            <person name="Currall B.B."/>
            <person name="Morton C.C."/>
            <person name="Nishita M."/>
            <person name="Minami Y."/>
            <person name="Lu Z."/>
            <person name="Walz K."/>
            <person name="Tekin M."/>
        </authorList>
    </citation>
    <scope>INVOLVEMENT IN DFNB108</scope>
    <scope>VARIANT DFNB108 THR-736</scope>
    <scope>CHARACTERIZATION OF VARIANT DFNB108 THR-736</scope>
    <scope>FUNCTION</scope>
    <scope>SUBCELLULAR LOCATION</scope>
</reference>
<sequence length="937" mass="104283">MHRPRRRGTRPPLLALLAALLLAARGAAAQETELSVSAELVPTSSWNISSELNKDSYLTLDEPMNNITTSLGQTAELHCKVSGNPPPTIRWFKNDAPVVQEPRRLSFRSTIYGSRLRIRNLDTTDTGYFQCVATNGKEVVSSTGVLFVKFGPPPTASPGYSDEYEEDGFCQPYRGIACARFIGNRTVYMESLHMQGEIENQITAAFTMIGTSSHLSDKCSQFAIPSLCHYAFPYCDETSSVPKPRDLCRDECEILENVLCQTEYIFARSNPMILMRLKLPNCEDLPQPESPEAANCIRIGIPMADPINKNHKCYNSTGVDYRGTVSVTKSGRQCQPWNSQYPHTHTFTALRFPELNGGHSYCRNPGNQKEAPWCFTLDENFKSDLCDIPACDSKDSKEKNKMEILYILVPSVAIPLAIALLFFFICVCRNNQKSSSAPVQRQPKHVRGQNVEMSMLNAYKPKSKAKELPLSAVRFMEELGECAFGKIYKGHLYLPGMDHAQLVAIKTLKDYNNPQQWTEFQQEASLMAELHHPNIVCLLGAVTQEQPVCMLFEYINQGDLHEFLIMRSPHSDVGCSSDEDGTVKSSLDHGDFLHIAIQIAAGMEYLSSHFFVHKDLAARNILIGEQLHVKISDLGLSREIYSADYYRVQSKSLLPIRWMPPEAIMYGKFSSDSDIWSFGVVLWEIFSFGLQPYYGFSNQEVIEMVRKRQLLPCSEDCPPRMYSLMTECWNEIPSRRPRFKDIHVRLRSWEGLSSHTSSTTPSGGNATTQTTSLSASPVSNLSNPRYPNYMFPSQGITPQGQIAGFIGPPIPQNQRFIPINGYPIPPGYAAFPAAHYQPTGPPRVIQHCPPPKSRSPSSASGSTSTGHVTSLPSSGSNQEANIPLLPHMSIPNHPGGMGITVFGNKSQKPYKIDSKQASLLGDANIHGHTESMISAEL</sequence>
<accession>Q01973</accession>
<accession>Q5VVX6</accession>
<accession>Q66K77</accession>
<accession>Q92776</accession>
<dbReference type="EMBL" id="M97675">
    <property type="protein sequence ID" value="AAA60275.1"/>
    <property type="molecule type" value="mRNA"/>
</dbReference>
<dbReference type="EMBL" id="U38894">
    <property type="protein sequence ID" value="AAC50714.1"/>
    <property type="molecule type" value="mRNA"/>
</dbReference>
<dbReference type="EMBL" id="AL137859">
    <property type="status" value="NOT_ANNOTATED_CDS"/>
    <property type="molecule type" value="Genomic_DNA"/>
</dbReference>
<dbReference type="EMBL" id="AL161742">
    <property type="status" value="NOT_ANNOTATED_CDS"/>
    <property type="molecule type" value="Genomic_DNA"/>
</dbReference>
<dbReference type="EMBL" id="AL445205">
    <property type="status" value="NOT_ANNOTATED_CDS"/>
    <property type="molecule type" value="Genomic_DNA"/>
</dbReference>
<dbReference type="EMBL" id="AL138793">
    <property type="status" value="NOT_ANNOTATED_CDS"/>
    <property type="molecule type" value="Genomic_DNA"/>
</dbReference>
<dbReference type="EMBL" id="AL353713">
    <property type="status" value="NOT_ANNOTATED_CDS"/>
    <property type="molecule type" value="Genomic_DNA"/>
</dbReference>
<dbReference type="EMBL" id="AL808029">
    <property type="status" value="NOT_ANNOTATED_CDS"/>
    <property type="molecule type" value="Genomic_DNA"/>
</dbReference>
<dbReference type="EMBL" id="AL808030">
    <property type="status" value="NOT_ANNOTATED_CDS"/>
    <property type="molecule type" value="Genomic_DNA"/>
</dbReference>
<dbReference type="EMBL" id="CH471059">
    <property type="protein sequence ID" value="EAX06556.1"/>
    <property type="molecule type" value="Genomic_DNA"/>
</dbReference>
<dbReference type="EMBL" id="BC080541">
    <property type="protein sequence ID" value="AAH80541.1"/>
    <property type="molecule type" value="mRNA"/>
</dbReference>
<dbReference type="CCDS" id="CCDS41344.1">
    <molecule id="Q01973-3"/>
</dbReference>
<dbReference type="CCDS" id="CCDS626.1">
    <molecule id="Q01973-1"/>
</dbReference>
<dbReference type="PIR" id="A45082">
    <property type="entry name" value="A45082"/>
</dbReference>
<dbReference type="RefSeq" id="NP_001077061.1">
    <molecule id="Q01973-3"/>
    <property type="nucleotide sequence ID" value="NM_001083592.2"/>
</dbReference>
<dbReference type="RefSeq" id="NP_005003.2">
    <molecule id="Q01973-1"/>
    <property type="nucleotide sequence ID" value="NM_005012.4"/>
</dbReference>
<dbReference type="PDB" id="5Z55">
    <property type="method" value="NMR"/>
    <property type="chains" value="A=312-394"/>
</dbReference>
<dbReference type="PDB" id="6BA5">
    <property type="method" value="X-ray"/>
    <property type="resolution" value="1.62 A"/>
    <property type="chains" value="M/N/O/P=311-391"/>
</dbReference>
<dbReference type="PDB" id="6BAN">
    <property type="method" value="X-ray"/>
    <property type="resolution" value="1.95 A"/>
    <property type="chains" value="M/N/O/P=311-391"/>
</dbReference>
<dbReference type="PDB" id="6TU9">
    <property type="method" value="X-ray"/>
    <property type="resolution" value="1.94 A"/>
    <property type="chains" value="A/B=453-752"/>
</dbReference>
<dbReference type="PDB" id="7TNG">
    <property type="method" value="X-ray"/>
    <property type="resolution" value="1.40 A"/>
    <property type="chains" value="A=312-393"/>
</dbReference>
<dbReference type="PDBsum" id="5Z55"/>
<dbReference type="PDBsum" id="6BA5"/>
<dbReference type="PDBsum" id="6BAN"/>
<dbReference type="PDBsum" id="6TU9"/>
<dbReference type="PDBsum" id="7TNG"/>
<dbReference type="SMR" id="Q01973"/>
<dbReference type="BioGRID" id="110973">
    <property type="interactions" value="120"/>
</dbReference>
<dbReference type="DIP" id="DIP-29734N"/>
<dbReference type="FunCoup" id="Q01973">
    <property type="interactions" value="357"/>
</dbReference>
<dbReference type="IntAct" id="Q01973">
    <property type="interactions" value="102"/>
</dbReference>
<dbReference type="MINT" id="Q01973"/>
<dbReference type="STRING" id="9606.ENSP00000360120"/>
<dbReference type="BindingDB" id="Q01973"/>
<dbReference type="ChEMBL" id="CHEMBL4665585"/>
<dbReference type="TCDB" id="8.A.23.1.60">
    <property type="family name" value="the basigin (basigin) family"/>
</dbReference>
<dbReference type="GlyCosmos" id="Q01973">
    <property type="glycosylation" value="4 sites, No reported glycans"/>
</dbReference>
<dbReference type="GlyGen" id="Q01973">
    <property type="glycosylation" value="5 sites, 5 N-linked glycans (2 sites)"/>
</dbReference>
<dbReference type="iPTMnet" id="Q01973"/>
<dbReference type="PhosphoSitePlus" id="Q01973"/>
<dbReference type="SwissPalm" id="Q01973"/>
<dbReference type="BioMuta" id="ROR1"/>
<dbReference type="DMDM" id="118572711"/>
<dbReference type="jPOST" id="Q01973"/>
<dbReference type="MassIVE" id="Q01973"/>
<dbReference type="PaxDb" id="9606-ENSP00000360120"/>
<dbReference type="PeptideAtlas" id="Q01973"/>
<dbReference type="ProteomicsDB" id="58025">
    <molecule id="Q01973-1"/>
</dbReference>
<dbReference type="ProteomicsDB" id="58026">
    <molecule id="Q01973-2"/>
</dbReference>
<dbReference type="ProteomicsDB" id="58027">
    <molecule id="Q01973-3"/>
</dbReference>
<dbReference type="Pumba" id="Q01973"/>
<dbReference type="ABCD" id="Q01973">
    <property type="antibodies" value="29 sequenced antibodies"/>
</dbReference>
<dbReference type="Antibodypedia" id="33360">
    <property type="antibodies" value="919 antibodies from 42 providers"/>
</dbReference>
<dbReference type="DNASU" id="4919"/>
<dbReference type="Ensembl" id="ENST00000371079.6">
    <molecule id="Q01973-1"/>
    <property type="protein sequence ID" value="ENSP00000360120.1"/>
    <property type="gene ID" value="ENSG00000185483.13"/>
</dbReference>
<dbReference type="Ensembl" id="ENST00000371080.5">
    <molecule id="Q01973-3"/>
    <property type="protein sequence ID" value="ENSP00000360121.1"/>
    <property type="gene ID" value="ENSG00000185483.13"/>
</dbReference>
<dbReference type="GeneID" id="4919"/>
<dbReference type="KEGG" id="hsa:4919"/>
<dbReference type="MANE-Select" id="ENST00000371079.6">
    <property type="protein sequence ID" value="ENSP00000360120.1"/>
    <property type="RefSeq nucleotide sequence ID" value="NM_005012.4"/>
    <property type="RefSeq protein sequence ID" value="NP_005003.2"/>
</dbReference>
<dbReference type="UCSC" id="uc001dbi.5">
    <molecule id="Q01973-1"/>
    <property type="organism name" value="human"/>
</dbReference>
<dbReference type="AGR" id="HGNC:10256"/>
<dbReference type="CTD" id="4919"/>
<dbReference type="DisGeNET" id="4919"/>
<dbReference type="GeneCards" id="ROR1"/>
<dbReference type="HGNC" id="HGNC:10256">
    <property type="gene designation" value="ROR1"/>
</dbReference>
<dbReference type="HPA" id="ENSG00000185483">
    <property type="expression patterns" value="Tissue enhanced (parathyroid)"/>
</dbReference>
<dbReference type="MalaCards" id="ROR1"/>
<dbReference type="MIM" id="602336">
    <property type="type" value="gene"/>
</dbReference>
<dbReference type="MIM" id="617654">
    <property type="type" value="phenotype"/>
</dbReference>
<dbReference type="neXtProt" id="NX_Q01973"/>
<dbReference type="OpenTargets" id="ENSG00000185483"/>
<dbReference type="Orphanet" id="90636">
    <property type="disease" value="Rare autosomal recessive non-syndromic sensorineural deafness type DFNB"/>
</dbReference>
<dbReference type="PharmGKB" id="PA34628"/>
<dbReference type="VEuPathDB" id="HostDB:ENSG00000185483"/>
<dbReference type="eggNOG" id="KOG1026">
    <property type="taxonomic scope" value="Eukaryota"/>
</dbReference>
<dbReference type="GeneTree" id="ENSGT00940000153947"/>
<dbReference type="HOGENOM" id="CLU_701993_0_0_1"/>
<dbReference type="InParanoid" id="Q01973"/>
<dbReference type="OMA" id="IQNDECP"/>
<dbReference type="OrthoDB" id="2431000at2759"/>
<dbReference type="PAN-GO" id="Q01973">
    <property type="GO annotations" value="8 GO annotations based on evolutionary models"/>
</dbReference>
<dbReference type="PhylomeDB" id="Q01973"/>
<dbReference type="TreeFam" id="TF106465"/>
<dbReference type="BRENDA" id="2.7.10.1">
    <property type="organism ID" value="2681"/>
</dbReference>
<dbReference type="PathwayCommons" id="Q01973"/>
<dbReference type="Reactome" id="R-HSA-5140745">
    <property type="pathway name" value="WNT5A-dependent internalization of FZD2, FZD5 and ROR2"/>
</dbReference>
<dbReference type="SignaLink" id="Q01973"/>
<dbReference type="SIGNOR" id="Q01973"/>
<dbReference type="BioGRID-ORCS" id="4919">
    <property type="hits" value="17 hits in 1190 CRISPR screens"/>
</dbReference>
<dbReference type="ChiTaRS" id="ROR1">
    <property type="organism name" value="human"/>
</dbReference>
<dbReference type="GeneWiki" id="ROR1"/>
<dbReference type="GenomeRNAi" id="4919"/>
<dbReference type="Pharos" id="Q01973">
    <property type="development level" value="Tbio"/>
</dbReference>
<dbReference type="PRO" id="PR:Q01973"/>
<dbReference type="Proteomes" id="UP000005640">
    <property type="component" value="Chromosome 1"/>
</dbReference>
<dbReference type="RNAct" id="Q01973">
    <property type="molecule type" value="protein"/>
</dbReference>
<dbReference type="Bgee" id="ENSG00000185483">
    <property type="expression patterns" value="Expressed in germinal epithelium of ovary and 154 other cell types or tissues"/>
</dbReference>
<dbReference type="ExpressionAtlas" id="Q01973">
    <property type="expression patterns" value="baseline and differential"/>
</dbReference>
<dbReference type="GO" id="GO:0030424">
    <property type="term" value="C:axon"/>
    <property type="evidence" value="ECO:0000318"/>
    <property type="project" value="GO_Central"/>
</dbReference>
<dbReference type="GO" id="GO:0043679">
    <property type="term" value="C:axon terminus"/>
    <property type="evidence" value="ECO:0000250"/>
    <property type="project" value="UniProtKB"/>
</dbReference>
<dbReference type="GO" id="GO:0009986">
    <property type="term" value="C:cell surface"/>
    <property type="evidence" value="ECO:0007669"/>
    <property type="project" value="Ensembl"/>
</dbReference>
<dbReference type="GO" id="GO:0005737">
    <property type="term" value="C:cytoplasm"/>
    <property type="evidence" value="ECO:0000304"/>
    <property type="project" value="ProtInc"/>
</dbReference>
<dbReference type="GO" id="GO:0005886">
    <property type="term" value="C:plasma membrane"/>
    <property type="evidence" value="ECO:0000314"/>
    <property type="project" value="UniProtKB"/>
</dbReference>
<dbReference type="GO" id="GO:0043235">
    <property type="term" value="C:receptor complex"/>
    <property type="evidence" value="ECO:0000314"/>
    <property type="project" value="MGI"/>
</dbReference>
<dbReference type="GO" id="GO:0001725">
    <property type="term" value="C:stress fiber"/>
    <property type="evidence" value="ECO:0007669"/>
    <property type="project" value="Ensembl"/>
</dbReference>
<dbReference type="GO" id="GO:0005524">
    <property type="term" value="F:ATP binding"/>
    <property type="evidence" value="ECO:0007669"/>
    <property type="project" value="UniProtKB-KW"/>
</dbReference>
<dbReference type="GO" id="GO:0015026">
    <property type="term" value="F:coreceptor activity"/>
    <property type="evidence" value="ECO:0000304"/>
    <property type="project" value="ParkinsonsUK-UCL"/>
</dbReference>
<dbReference type="GO" id="GO:0038023">
    <property type="term" value="F:signaling receptor activity"/>
    <property type="evidence" value="ECO:0000314"/>
    <property type="project" value="UniProt"/>
</dbReference>
<dbReference type="GO" id="GO:0004714">
    <property type="term" value="F:transmembrane receptor protein tyrosine kinase activity"/>
    <property type="evidence" value="ECO:0000304"/>
    <property type="project" value="ProtInc"/>
</dbReference>
<dbReference type="GO" id="GO:0042813">
    <property type="term" value="F:Wnt receptor activity"/>
    <property type="evidence" value="ECO:0000315"/>
    <property type="project" value="UniProtKB"/>
</dbReference>
<dbReference type="GO" id="GO:0017147">
    <property type="term" value="F:Wnt-protein binding"/>
    <property type="evidence" value="ECO:0000353"/>
    <property type="project" value="UniProtKB"/>
</dbReference>
<dbReference type="GO" id="GO:0014002">
    <property type="term" value="P:astrocyte development"/>
    <property type="evidence" value="ECO:0007669"/>
    <property type="project" value="Ensembl"/>
</dbReference>
<dbReference type="GO" id="GO:0008283">
    <property type="term" value="P:cell population proliferation"/>
    <property type="evidence" value="ECO:0000314"/>
    <property type="project" value="UniProt"/>
</dbReference>
<dbReference type="GO" id="GO:0007169">
    <property type="term" value="P:cell surface receptor protein tyrosine kinase signaling pathway"/>
    <property type="evidence" value="ECO:0000304"/>
    <property type="project" value="ProtInc"/>
</dbReference>
<dbReference type="GO" id="GO:0048839">
    <property type="term" value="P:inner ear development"/>
    <property type="evidence" value="ECO:0000250"/>
    <property type="project" value="UniProtKB"/>
</dbReference>
<dbReference type="GO" id="GO:0043123">
    <property type="term" value="P:positive regulation of canonical NF-kappaB signal transduction"/>
    <property type="evidence" value="ECO:0000315"/>
    <property type="project" value="UniProtKB"/>
</dbReference>
<dbReference type="GO" id="GO:0051092">
    <property type="term" value="P:positive regulation of NF-kappaB transcription factor activity"/>
    <property type="evidence" value="ECO:0000315"/>
    <property type="project" value="UniProtKB"/>
</dbReference>
<dbReference type="GO" id="GO:0007605">
    <property type="term" value="P:sensory perception of sound"/>
    <property type="evidence" value="ECO:0000315"/>
    <property type="project" value="UniProtKB"/>
</dbReference>
<dbReference type="CDD" id="cd07467">
    <property type="entry name" value="CRD_TK_ROR1"/>
    <property type="match status" value="1"/>
</dbReference>
<dbReference type="CDD" id="cd00108">
    <property type="entry name" value="KR"/>
    <property type="match status" value="1"/>
</dbReference>
<dbReference type="CDD" id="cd05090">
    <property type="entry name" value="PTKc_Ror1"/>
    <property type="match status" value="1"/>
</dbReference>
<dbReference type="FunFam" id="1.10.2000.10:FF:000002">
    <property type="entry name" value="Inactive tyrosine-protein kinase transmembrane receptor ROR1"/>
    <property type="match status" value="1"/>
</dbReference>
<dbReference type="FunFam" id="2.40.20.10:FF:000003">
    <property type="entry name" value="Inactive tyrosine-protein kinase transmembrane receptor ROR1"/>
    <property type="match status" value="1"/>
</dbReference>
<dbReference type="FunFam" id="2.60.40.10:FF:000242">
    <property type="entry name" value="Inactive tyrosine-protein kinase transmembrane receptor ROR1"/>
    <property type="match status" value="1"/>
</dbReference>
<dbReference type="FunFam" id="1.10.510.10:FF:000116">
    <property type="entry name" value="inactive tyrosine-protein kinase transmembrane receptor ROR1"/>
    <property type="match status" value="1"/>
</dbReference>
<dbReference type="FunFam" id="3.30.200.20:FF:000139">
    <property type="entry name" value="inactive tyrosine-protein kinase transmembrane receptor ROR1"/>
    <property type="match status" value="1"/>
</dbReference>
<dbReference type="Gene3D" id="1.10.2000.10">
    <property type="entry name" value="Frizzled cysteine-rich domain"/>
    <property type="match status" value="1"/>
</dbReference>
<dbReference type="Gene3D" id="2.60.40.10">
    <property type="entry name" value="Immunoglobulins"/>
    <property type="match status" value="1"/>
</dbReference>
<dbReference type="Gene3D" id="3.30.200.20">
    <property type="entry name" value="Phosphorylase Kinase, domain 1"/>
    <property type="match status" value="1"/>
</dbReference>
<dbReference type="Gene3D" id="2.40.20.10">
    <property type="entry name" value="Plasminogen Kringle 4"/>
    <property type="match status" value="1"/>
</dbReference>
<dbReference type="Gene3D" id="1.10.510.10">
    <property type="entry name" value="Transferase(Phosphotransferase) domain 1"/>
    <property type="match status" value="1"/>
</dbReference>
<dbReference type="InterPro" id="IPR020067">
    <property type="entry name" value="Frizzled_dom"/>
</dbReference>
<dbReference type="InterPro" id="IPR036790">
    <property type="entry name" value="Frizzled_dom_sf"/>
</dbReference>
<dbReference type="InterPro" id="IPR007110">
    <property type="entry name" value="Ig-like_dom"/>
</dbReference>
<dbReference type="InterPro" id="IPR036179">
    <property type="entry name" value="Ig-like_dom_sf"/>
</dbReference>
<dbReference type="InterPro" id="IPR013783">
    <property type="entry name" value="Ig-like_fold"/>
</dbReference>
<dbReference type="InterPro" id="IPR013098">
    <property type="entry name" value="Ig_I-set"/>
</dbReference>
<dbReference type="InterPro" id="IPR003599">
    <property type="entry name" value="Ig_sub"/>
</dbReference>
<dbReference type="InterPro" id="IPR003598">
    <property type="entry name" value="Ig_sub2"/>
</dbReference>
<dbReference type="InterPro" id="IPR011009">
    <property type="entry name" value="Kinase-like_dom_sf"/>
</dbReference>
<dbReference type="InterPro" id="IPR000001">
    <property type="entry name" value="Kringle"/>
</dbReference>
<dbReference type="InterPro" id="IPR013806">
    <property type="entry name" value="Kringle-like"/>
</dbReference>
<dbReference type="InterPro" id="IPR018056">
    <property type="entry name" value="Kringle_CS"/>
</dbReference>
<dbReference type="InterPro" id="IPR038178">
    <property type="entry name" value="Kringle_sf"/>
</dbReference>
<dbReference type="InterPro" id="IPR000719">
    <property type="entry name" value="Prot_kinase_dom"/>
</dbReference>
<dbReference type="InterPro" id="IPR050122">
    <property type="entry name" value="RTK"/>
</dbReference>
<dbReference type="InterPro" id="IPR001245">
    <property type="entry name" value="Ser-Thr/Tyr_kinase_cat_dom"/>
</dbReference>
<dbReference type="InterPro" id="IPR008266">
    <property type="entry name" value="Tyr_kinase_AS"/>
</dbReference>
<dbReference type="InterPro" id="IPR016247">
    <property type="entry name" value="Tyr_kinase_rcpt_ROR"/>
</dbReference>
<dbReference type="PANTHER" id="PTHR24416:SF134">
    <property type="entry name" value="INACTIVE TYROSINE-PROTEIN KINASE TRANSMEMBRANE RECEPTOR ROR1"/>
    <property type="match status" value="1"/>
</dbReference>
<dbReference type="PANTHER" id="PTHR24416">
    <property type="entry name" value="TYROSINE-PROTEIN KINASE RECEPTOR"/>
    <property type="match status" value="1"/>
</dbReference>
<dbReference type="Pfam" id="PF01392">
    <property type="entry name" value="Fz"/>
    <property type="match status" value="1"/>
</dbReference>
<dbReference type="Pfam" id="PF07679">
    <property type="entry name" value="I-set"/>
    <property type="match status" value="1"/>
</dbReference>
<dbReference type="Pfam" id="PF00051">
    <property type="entry name" value="Kringle"/>
    <property type="match status" value="1"/>
</dbReference>
<dbReference type="Pfam" id="PF07714">
    <property type="entry name" value="PK_Tyr_Ser-Thr"/>
    <property type="match status" value="1"/>
</dbReference>
<dbReference type="PIRSF" id="PIRSF000624">
    <property type="entry name" value="TyrPK_TMrec_ROR"/>
    <property type="match status" value="1"/>
</dbReference>
<dbReference type="PRINTS" id="PR00018">
    <property type="entry name" value="KRINGLE"/>
</dbReference>
<dbReference type="PRINTS" id="PR00109">
    <property type="entry name" value="TYRKINASE"/>
</dbReference>
<dbReference type="SMART" id="SM00409">
    <property type="entry name" value="IG"/>
    <property type="match status" value="1"/>
</dbReference>
<dbReference type="SMART" id="SM00408">
    <property type="entry name" value="IGc2"/>
    <property type="match status" value="1"/>
</dbReference>
<dbReference type="SMART" id="SM00130">
    <property type="entry name" value="KR"/>
    <property type="match status" value="1"/>
</dbReference>
<dbReference type="SUPFAM" id="SSF48726">
    <property type="entry name" value="Immunoglobulin"/>
    <property type="match status" value="1"/>
</dbReference>
<dbReference type="SUPFAM" id="SSF57440">
    <property type="entry name" value="Kringle-like"/>
    <property type="match status" value="1"/>
</dbReference>
<dbReference type="SUPFAM" id="SSF56112">
    <property type="entry name" value="Protein kinase-like (PK-like)"/>
    <property type="match status" value="1"/>
</dbReference>
<dbReference type="PROSITE" id="PS50038">
    <property type="entry name" value="FZ"/>
    <property type="match status" value="1"/>
</dbReference>
<dbReference type="PROSITE" id="PS50835">
    <property type="entry name" value="IG_LIKE"/>
    <property type="match status" value="1"/>
</dbReference>
<dbReference type="PROSITE" id="PS00021">
    <property type="entry name" value="KRINGLE_1"/>
    <property type="match status" value="1"/>
</dbReference>
<dbReference type="PROSITE" id="PS50070">
    <property type="entry name" value="KRINGLE_2"/>
    <property type="match status" value="1"/>
</dbReference>
<dbReference type="PROSITE" id="PS50011">
    <property type="entry name" value="PROTEIN_KINASE_DOM"/>
    <property type="match status" value="1"/>
</dbReference>
<dbReference type="PROSITE" id="PS00109">
    <property type="entry name" value="PROTEIN_KINASE_TYR"/>
    <property type="match status" value="1"/>
</dbReference>